<feature type="chain" id="PRO_0000109103" description="UDP-N-acetylmuramoylalanine--D-glutamate ligase">
    <location>
        <begin position="1"/>
        <end position="450"/>
    </location>
</feature>
<feature type="binding site" evidence="1">
    <location>
        <begin position="119"/>
        <end position="125"/>
    </location>
    <ligand>
        <name>ATP</name>
        <dbReference type="ChEBI" id="CHEBI:30616"/>
    </ligand>
</feature>
<name>MURD_STRT2</name>
<reference key="1">
    <citation type="journal article" date="2004" name="Nat. Biotechnol.">
        <title>Complete sequence and comparative genome analysis of the dairy bacterium Streptococcus thermophilus.</title>
        <authorList>
            <person name="Bolotin A."/>
            <person name="Quinquis B."/>
            <person name="Renault P."/>
            <person name="Sorokin A."/>
            <person name="Ehrlich S.D."/>
            <person name="Kulakauskas S."/>
            <person name="Lapidus A."/>
            <person name="Goltsman E."/>
            <person name="Mazur M."/>
            <person name="Pusch G.D."/>
            <person name="Fonstein M."/>
            <person name="Overbeek R."/>
            <person name="Kyprides N."/>
            <person name="Purnelle B."/>
            <person name="Prozzi D."/>
            <person name="Ngui K."/>
            <person name="Masuy D."/>
            <person name="Hancy F."/>
            <person name="Burteau S."/>
            <person name="Boutry M."/>
            <person name="Delcour J."/>
            <person name="Goffeau A."/>
            <person name="Hols P."/>
        </authorList>
    </citation>
    <scope>NUCLEOTIDE SEQUENCE [LARGE SCALE GENOMIC DNA]</scope>
    <source>
        <strain>ATCC BAA-250 / LMG 18311</strain>
    </source>
</reference>
<protein>
    <recommendedName>
        <fullName evidence="1">UDP-N-acetylmuramoylalanine--D-glutamate ligase</fullName>
        <ecNumber evidence="1">6.3.2.9</ecNumber>
    </recommendedName>
    <alternativeName>
        <fullName evidence="1">D-glutamic acid-adding enzyme</fullName>
    </alternativeName>
    <alternativeName>
        <fullName evidence="1">UDP-N-acetylmuramoyl-L-alanyl-D-glutamate synthetase</fullName>
    </alternativeName>
</protein>
<organism>
    <name type="scientific">Streptococcus thermophilus (strain ATCC BAA-250 / LMG 18311)</name>
    <dbReference type="NCBI Taxonomy" id="264199"/>
    <lineage>
        <taxon>Bacteria</taxon>
        <taxon>Bacillati</taxon>
        <taxon>Bacillota</taxon>
        <taxon>Bacilli</taxon>
        <taxon>Lactobacillales</taxon>
        <taxon>Streptococcaceae</taxon>
        <taxon>Streptococcus</taxon>
    </lineage>
</organism>
<keyword id="KW-0067">ATP-binding</keyword>
<keyword id="KW-0131">Cell cycle</keyword>
<keyword id="KW-0132">Cell division</keyword>
<keyword id="KW-0133">Cell shape</keyword>
<keyword id="KW-0961">Cell wall biogenesis/degradation</keyword>
<keyword id="KW-0963">Cytoplasm</keyword>
<keyword id="KW-0436">Ligase</keyword>
<keyword id="KW-0547">Nucleotide-binding</keyword>
<keyword id="KW-0573">Peptidoglycan synthesis</keyword>
<keyword id="KW-1185">Reference proteome</keyword>
<accession>Q5M4Y2</accession>
<sequence>MKSITQLENKKVLVLGLAKSGEAAARLLAKLGAIVTVNDGKAFEENPSAQSLLEEGIKVVCGGHPLELLDENFELMVKNPGIRYDNPMVARALEKEIPVWTEVELAYLVSEAPIIGITGSNGKTTTTTMIADVLNHGGKSGVLSGNIGFPASEVAQSVTNQDTLVMELSSFQLMGIESFHPHIAVITNLMPTHIDYHGSFEEYVAAKWNIQNEMTSDDFIILNFNQDLAKELATQTNAQVVPFSTVEKVDGAYLENGGLYFKGELLMHADELGVPGSHNVENALATIAVAKLSGVSNQAIKETLSSFGGVKHRLQFVDTIDDVKFYNDSKSTNILATQKALSGFDNSKVILIAGGLDRGNEFDELIPDITGLKKMVILGESAPRVKRAADKAGVTYLDAKDVADATRIAFEQASAGDVVLLSPANASWDMYKNFEVRGDEFITTVERLKG</sequence>
<gene>
    <name evidence="1" type="primary">murD</name>
    <name type="ordered locus">stu0731</name>
</gene>
<evidence type="ECO:0000255" key="1">
    <source>
        <dbReference type="HAMAP-Rule" id="MF_00639"/>
    </source>
</evidence>
<comment type="function">
    <text evidence="1">Cell wall formation. Catalyzes the addition of glutamate to the nucleotide precursor UDP-N-acetylmuramoyl-L-alanine (UMA).</text>
</comment>
<comment type="catalytic activity">
    <reaction evidence="1">
        <text>UDP-N-acetyl-alpha-D-muramoyl-L-alanine + D-glutamate + ATP = UDP-N-acetyl-alpha-D-muramoyl-L-alanyl-D-glutamate + ADP + phosphate + H(+)</text>
        <dbReference type="Rhea" id="RHEA:16429"/>
        <dbReference type="ChEBI" id="CHEBI:15378"/>
        <dbReference type="ChEBI" id="CHEBI:29986"/>
        <dbReference type="ChEBI" id="CHEBI:30616"/>
        <dbReference type="ChEBI" id="CHEBI:43474"/>
        <dbReference type="ChEBI" id="CHEBI:83898"/>
        <dbReference type="ChEBI" id="CHEBI:83900"/>
        <dbReference type="ChEBI" id="CHEBI:456216"/>
        <dbReference type="EC" id="6.3.2.9"/>
    </reaction>
</comment>
<comment type="pathway">
    <text evidence="1">Cell wall biogenesis; peptidoglycan biosynthesis.</text>
</comment>
<comment type="subcellular location">
    <subcellularLocation>
        <location evidence="1">Cytoplasm</location>
    </subcellularLocation>
</comment>
<comment type="similarity">
    <text evidence="1">Belongs to the MurCDEF family.</text>
</comment>
<proteinExistence type="inferred from homology"/>
<dbReference type="EC" id="6.3.2.9" evidence="1"/>
<dbReference type="EMBL" id="CP000023">
    <property type="protein sequence ID" value="AAV60424.1"/>
    <property type="molecule type" value="Genomic_DNA"/>
</dbReference>
<dbReference type="RefSeq" id="WP_011225774.1">
    <property type="nucleotide sequence ID" value="NC_006448.1"/>
</dbReference>
<dbReference type="SMR" id="Q5M4Y2"/>
<dbReference type="STRING" id="264199.stu0731"/>
<dbReference type="GeneID" id="66898630"/>
<dbReference type="KEGG" id="stl:stu0731"/>
<dbReference type="eggNOG" id="COG0771">
    <property type="taxonomic scope" value="Bacteria"/>
</dbReference>
<dbReference type="HOGENOM" id="CLU_032540_0_1_9"/>
<dbReference type="UniPathway" id="UPA00219"/>
<dbReference type="Proteomes" id="UP000001170">
    <property type="component" value="Chromosome"/>
</dbReference>
<dbReference type="GO" id="GO:0005737">
    <property type="term" value="C:cytoplasm"/>
    <property type="evidence" value="ECO:0007669"/>
    <property type="project" value="UniProtKB-SubCell"/>
</dbReference>
<dbReference type="GO" id="GO:0005524">
    <property type="term" value="F:ATP binding"/>
    <property type="evidence" value="ECO:0007669"/>
    <property type="project" value="UniProtKB-UniRule"/>
</dbReference>
<dbReference type="GO" id="GO:0008764">
    <property type="term" value="F:UDP-N-acetylmuramoylalanine-D-glutamate ligase activity"/>
    <property type="evidence" value="ECO:0007669"/>
    <property type="project" value="UniProtKB-UniRule"/>
</dbReference>
<dbReference type="GO" id="GO:0051301">
    <property type="term" value="P:cell division"/>
    <property type="evidence" value="ECO:0007669"/>
    <property type="project" value="UniProtKB-KW"/>
</dbReference>
<dbReference type="GO" id="GO:0071555">
    <property type="term" value="P:cell wall organization"/>
    <property type="evidence" value="ECO:0007669"/>
    <property type="project" value="UniProtKB-KW"/>
</dbReference>
<dbReference type="GO" id="GO:0009252">
    <property type="term" value="P:peptidoglycan biosynthetic process"/>
    <property type="evidence" value="ECO:0007669"/>
    <property type="project" value="UniProtKB-UniRule"/>
</dbReference>
<dbReference type="GO" id="GO:0008360">
    <property type="term" value="P:regulation of cell shape"/>
    <property type="evidence" value="ECO:0007669"/>
    <property type="project" value="UniProtKB-KW"/>
</dbReference>
<dbReference type="Gene3D" id="3.90.190.20">
    <property type="entry name" value="Mur ligase, C-terminal domain"/>
    <property type="match status" value="1"/>
</dbReference>
<dbReference type="Gene3D" id="3.40.1190.10">
    <property type="entry name" value="Mur-like, catalytic domain"/>
    <property type="match status" value="1"/>
</dbReference>
<dbReference type="Gene3D" id="3.40.50.720">
    <property type="entry name" value="NAD(P)-binding Rossmann-like Domain"/>
    <property type="match status" value="1"/>
</dbReference>
<dbReference type="HAMAP" id="MF_00639">
    <property type="entry name" value="MurD"/>
    <property type="match status" value="1"/>
</dbReference>
<dbReference type="InterPro" id="IPR036565">
    <property type="entry name" value="Mur-like_cat_sf"/>
</dbReference>
<dbReference type="InterPro" id="IPR004101">
    <property type="entry name" value="Mur_ligase_C"/>
</dbReference>
<dbReference type="InterPro" id="IPR036615">
    <property type="entry name" value="Mur_ligase_C_dom_sf"/>
</dbReference>
<dbReference type="InterPro" id="IPR013221">
    <property type="entry name" value="Mur_ligase_cen"/>
</dbReference>
<dbReference type="InterPro" id="IPR005762">
    <property type="entry name" value="MurD"/>
</dbReference>
<dbReference type="NCBIfam" id="TIGR01087">
    <property type="entry name" value="murD"/>
    <property type="match status" value="1"/>
</dbReference>
<dbReference type="PANTHER" id="PTHR43692">
    <property type="entry name" value="UDP-N-ACETYLMURAMOYLALANINE--D-GLUTAMATE LIGASE"/>
    <property type="match status" value="1"/>
</dbReference>
<dbReference type="PANTHER" id="PTHR43692:SF1">
    <property type="entry name" value="UDP-N-ACETYLMURAMOYLALANINE--D-GLUTAMATE LIGASE"/>
    <property type="match status" value="1"/>
</dbReference>
<dbReference type="Pfam" id="PF02875">
    <property type="entry name" value="Mur_ligase_C"/>
    <property type="match status" value="1"/>
</dbReference>
<dbReference type="Pfam" id="PF08245">
    <property type="entry name" value="Mur_ligase_M"/>
    <property type="match status" value="1"/>
</dbReference>
<dbReference type="Pfam" id="PF21799">
    <property type="entry name" value="MurD-like_N"/>
    <property type="match status" value="1"/>
</dbReference>
<dbReference type="SUPFAM" id="SSF51984">
    <property type="entry name" value="MurCD N-terminal domain"/>
    <property type="match status" value="1"/>
</dbReference>
<dbReference type="SUPFAM" id="SSF53623">
    <property type="entry name" value="MurD-like peptide ligases, catalytic domain"/>
    <property type="match status" value="1"/>
</dbReference>
<dbReference type="SUPFAM" id="SSF53244">
    <property type="entry name" value="MurD-like peptide ligases, peptide-binding domain"/>
    <property type="match status" value="1"/>
</dbReference>